<feature type="chain" id="PRO_1000143654" description="NADH-quinone oxidoreductase subunit I">
    <location>
        <begin position="1"/>
        <end position="162"/>
    </location>
</feature>
<feature type="domain" description="4Fe-4S ferredoxin-type 1" evidence="1">
    <location>
        <begin position="52"/>
        <end position="82"/>
    </location>
</feature>
<feature type="domain" description="4Fe-4S ferredoxin-type 2" evidence="1">
    <location>
        <begin position="93"/>
        <end position="122"/>
    </location>
</feature>
<feature type="binding site" evidence="1">
    <location>
        <position position="62"/>
    </location>
    <ligand>
        <name>[4Fe-4S] cluster</name>
        <dbReference type="ChEBI" id="CHEBI:49883"/>
        <label>1</label>
    </ligand>
</feature>
<feature type="binding site" evidence="1">
    <location>
        <position position="65"/>
    </location>
    <ligand>
        <name>[4Fe-4S] cluster</name>
        <dbReference type="ChEBI" id="CHEBI:49883"/>
        <label>1</label>
    </ligand>
</feature>
<feature type="binding site" evidence="1">
    <location>
        <position position="68"/>
    </location>
    <ligand>
        <name>[4Fe-4S] cluster</name>
        <dbReference type="ChEBI" id="CHEBI:49883"/>
        <label>1</label>
    </ligand>
</feature>
<feature type="binding site" evidence="1">
    <location>
        <position position="72"/>
    </location>
    <ligand>
        <name>[4Fe-4S] cluster</name>
        <dbReference type="ChEBI" id="CHEBI:49883"/>
        <label>2</label>
    </ligand>
</feature>
<feature type="binding site" evidence="1">
    <location>
        <position position="102"/>
    </location>
    <ligand>
        <name>[4Fe-4S] cluster</name>
        <dbReference type="ChEBI" id="CHEBI:49883"/>
        <label>2</label>
    </ligand>
</feature>
<feature type="binding site" evidence="1">
    <location>
        <position position="105"/>
    </location>
    <ligand>
        <name>[4Fe-4S] cluster</name>
        <dbReference type="ChEBI" id="CHEBI:49883"/>
        <label>2</label>
    </ligand>
</feature>
<feature type="binding site" evidence="1">
    <location>
        <position position="108"/>
    </location>
    <ligand>
        <name>[4Fe-4S] cluster</name>
        <dbReference type="ChEBI" id="CHEBI:49883"/>
        <label>2</label>
    </ligand>
</feature>
<feature type="binding site" evidence="1">
    <location>
        <position position="112"/>
    </location>
    <ligand>
        <name>[4Fe-4S] cluster</name>
        <dbReference type="ChEBI" id="CHEBI:49883"/>
        <label>1</label>
    </ligand>
</feature>
<sequence length="162" mass="18701">MRLDQVARSLLLKEFVSGFALAMRYLFKPKATINYPFEMGHRSPRFRGEHALRRYPNGEERCIACKLCEAVCPAQAITIEAGPRRNDGTRRTTRYDIDMVKCIYCGMCQEACPVDAIVEGPNFEFSVETREELLYDKQRLLANGDRWEREIARNIAADAPYR</sequence>
<evidence type="ECO:0000255" key="1">
    <source>
        <dbReference type="HAMAP-Rule" id="MF_01351"/>
    </source>
</evidence>
<reference key="1">
    <citation type="submission" date="2008-02" db="EMBL/GenBank/DDBJ databases">
        <title>Complete sequence of chromosome of Methylobacterium sp. 4-46.</title>
        <authorList>
            <consortium name="US DOE Joint Genome Institute"/>
            <person name="Copeland A."/>
            <person name="Lucas S."/>
            <person name="Lapidus A."/>
            <person name="Glavina del Rio T."/>
            <person name="Dalin E."/>
            <person name="Tice H."/>
            <person name="Bruce D."/>
            <person name="Goodwin L."/>
            <person name="Pitluck S."/>
            <person name="Chertkov O."/>
            <person name="Brettin T."/>
            <person name="Detter J.C."/>
            <person name="Han C."/>
            <person name="Kuske C.R."/>
            <person name="Schmutz J."/>
            <person name="Larimer F."/>
            <person name="Land M."/>
            <person name="Hauser L."/>
            <person name="Kyrpides N."/>
            <person name="Ivanova N."/>
            <person name="Marx C.J."/>
            <person name="Richardson P."/>
        </authorList>
    </citation>
    <scope>NUCLEOTIDE SEQUENCE [LARGE SCALE GENOMIC DNA]</scope>
    <source>
        <strain>4-46</strain>
    </source>
</reference>
<gene>
    <name evidence="1" type="primary">nuoI</name>
    <name type="ordered locus">M446_4398</name>
</gene>
<proteinExistence type="inferred from homology"/>
<keyword id="KW-0004">4Fe-4S</keyword>
<keyword id="KW-0997">Cell inner membrane</keyword>
<keyword id="KW-1003">Cell membrane</keyword>
<keyword id="KW-0408">Iron</keyword>
<keyword id="KW-0411">Iron-sulfur</keyword>
<keyword id="KW-0472">Membrane</keyword>
<keyword id="KW-0479">Metal-binding</keyword>
<keyword id="KW-0520">NAD</keyword>
<keyword id="KW-0874">Quinone</keyword>
<keyword id="KW-0677">Repeat</keyword>
<keyword id="KW-1278">Translocase</keyword>
<keyword id="KW-0830">Ubiquinone</keyword>
<protein>
    <recommendedName>
        <fullName evidence="1">NADH-quinone oxidoreductase subunit I</fullName>
        <ecNumber evidence="1">7.1.1.-</ecNumber>
    </recommendedName>
    <alternativeName>
        <fullName evidence="1">NADH dehydrogenase I subunit I</fullName>
    </alternativeName>
    <alternativeName>
        <fullName evidence="1">NDH-1 subunit I</fullName>
    </alternativeName>
</protein>
<dbReference type="EC" id="7.1.1.-" evidence="1"/>
<dbReference type="EMBL" id="CP000943">
    <property type="protein sequence ID" value="ACA18740.1"/>
    <property type="molecule type" value="Genomic_DNA"/>
</dbReference>
<dbReference type="RefSeq" id="WP_012334129.1">
    <property type="nucleotide sequence ID" value="NC_010511.1"/>
</dbReference>
<dbReference type="SMR" id="B0ULL2"/>
<dbReference type="STRING" id="426117.M446_4398"/>
<dbReference type="KEGG" id="met:M446_4398"/>
<dbReference type="eggNOG" id="COG1143">
    <property type="taxonomic scope" value="Bacteria"/>
</dbReference>
<dbReference type="HOGENOM" id="CLU_067218_5_1_5"/>
<dbReference type="GO" id="GO:0005886">
    <property type="term" value="C:plasma membrane"/>
    <property type="evidence" value="ECO:0007669"/>
    <property type="project" value="UniProtKB-SubCell"/>
</dbReference>
<dbReference type="GO" id="GO:0051539">
    <property type="term" value="F:4 iron, 4 sulfur cluster binding"/>
    <property type="evidence" value="ECO:0007669"/>
    <property type="project" value="UniProtKB-KW"/>
</dbReference>
<dbReference type="GO" id="GO:0005506">
    <property type="term" value="F:iron ion binding"/>
    <property type="evidence" value="ECO:0007669"/>
    <property type="project" value="UniProtKB-UniRule"/>
</dbReference>
<dbReference type="GO" id="GO:0050136">
    <property type="term" value="F:NADH:ubiquinone reductase (non-electrogenic) activity"/>
    <property type="evidence" value="ECO:0007669"/>
    <property type="project" value="UniProtKB-UniRule"/>
</dbReference>
<dbReference type="GO" id="GO:0048038">
    <property type="term" value="F:quinone binding"/>
    <property type="evidence" value="ECO:0007669"/>
    <property type="project" value="UniProtKB-KW"/>
</dbReference>
<dbReference type="GO" id="GO:0009060">
    <property type="term" value="P:aerobic respiration"/>
    <property type="evidence" value="ECO:0007669"/>
    <property type="project" value="TreeGrafter"/>
</dbReference>
<dbReference type="FunFam" id="3.30.70.3270:FF:000001">
    <property type="entry name" value="NADH-quinone oxidoreductase subunit I 1"/>
    <property type="match status" value="1"/>
</dbReference>
<dbReference type="Gene3D" id="3.30.70.3270">
    <property type="match status" value="1"/>
</dbReference>
<dbReference type="HAMAP" id="MF_01351">
    <property type="entry name" value="NDH1_NuoI"/>
    <property type="match status" value="1"/>
</dbReference>
<dbReference type="InterPro" id="IPR017896">
    <property type="entry name" value="4Fe4S_Fe-S-bd"/>
</dbReference>
<dbReference type="InterPro" id="IPR017900">
    <property type="entry name" value="4Fe4S_Fe_S_CS"/>
</dbReference>
<dbReference type="InterPro" id="IPR010226">
    <property type="entry name" value="NADH_quinone_OxRdtase_chainI"/>
</dbReference>
<dbReference type="NCBIfam" id="TIGR01971">
    <property type="entry name" value="NuoI"/>
    <property type="match status" value="1"/>
</dbReference>
<dbReference type="NCBIfam" id="NF004538">
    <property type="entry name" value="PRK05888.1-4"/>
    <property type="match status" value="1"/>
</dbReference>
<dbReference type="NCBIfam" id="NF004539">
    <property type="entry name" value="PRK05888.1-5"/>
    <property type="match status" value="1"/>
</dbReference>
<dbReference type="PANTHER" id="PTHR10849:SF20">
    <property type="entry name" value="NADH DEHYDROGENASE [UBIQUINONE] IRON-SULFUR PROTEIN 8, MITOCHONDRIAL"/>
    <property type="match status" value="1"/>
</dbReference>
<dbReference type="PANTHER" id="PTHR10849">
    <property type="entry name" value="NADH DEHYDROGENASE UBIQUINONE IRON-SULFUR PROTEIN 8, MITOCHONDRIAL"/>
    <property type="match status" value="1"/>
</dbReference>
<dbReference type="Pfam" id="PF12838">
    <property type="entry name" value="Fer4_7"/>
    <property type="match status" value="1"/>
</dbReference>
<dbReference type="SUPFAM" id="SSF54862">
    <property type="entry name" value="4Fe-4S ferredoxins"/>
    <property type="match status" value="1"/>
</dbReference>
<dbReference type="PROSITE" id="PS00198">
    <property type="entry name" value="4FE4S_FER_1"/>
    <property type="match status" value="2"/>
</dbReference>
<dbReference type="PROSITE" id="PS51379">
    <property type="entry name" value="4FE4S_FER_2"/>
    <property type="match status" value="2"/>
</dbReference>
<organism>
    <name type="scientific">Methylobacterium sp. (strain 4-46)</name>
    <dbReference type="NCBI Taxonomy" id="426117"/>
    <lineage>
        <taxon>Bacteria</taxon>
        <taxon>Pseudomonadati</taxon>
        <taxon>Pseudomonadota</taxon>
        <taxon>Alphaproteobacteria</taxon>
        <taxon>Hyphomicrobiales</taxon>
        <taxon>Methylobacteriaceae</taxon>
        <taxon>Methylobacterium</taxon>
    </lineage>
</organism>
<accession>B0ULL2</accession>
<comment type="function">
    <text evidence="1">NDH-1 shuttles electrons from NADH, via FMN and iron-sulfur (Fe-S) centers, to quinones in the respiratory chain. The immediate electron acceptor for the enzyme in this species is believed to be ubiquinone. Couples the redox reaction to proton translocation (for every two electrons transferred, four hydrogen ions are translocated across the cytoplasmic membrane), and thus conserves the redox energy in a proton gradient.</text>
</comment>
<comment type="catalytic activity">
    <reaction evidence="1">
        <text>a quinone + NADH + 5 H(+)(in) = a quinol + NAD(+) + 4 H(+)(out)</text>
        <dbReference type="Rhea" id="RHEA:57888"/>
        <dbReference type="ChEBI" id="CHEBI:15378"/>
        <dbReference type="ChEBI" id="CHEBI:24646"/>
        <dbReference type="ChEBI" id="CHEBI:57540"/>
        <dbReference type="ChEBI" id="CHEBI:57945"/>
        <dbReference type="ChEBI" id="CHEBI:132124"/>
    </reaction>
</comment>
<comment type="cofactor">
    <cofactor evidence="1">
        <name>[4Fe-4S] cluster</name>
        <dbReference type="ChEBI" id="CHEBI:49883"/>
    </cofactor>
    <text evidence="1">Binds 2 [4Fe-4S] clusters per subunit.</text>
</comment>
<comment type="subunit">
    <text evidence="1">NDH-1 is composed of 14 different subunits. Subunits NuoA, H, J, K, L, M, N constitute the membrane sector of the complex.</text>
</comment>
<comment type="subcellular location">
    <subcellularLocation>
        <location evidence="1">Cell inner membrane</location>
        <topology evidence="1">Peripheral membrane protein</topology>
    </subcellularLocation>
</comment>
<comment type="similarity">
    <text evidence="1">Belongs to the complex I 23 kDa subunit family.</text>
</comment>
<name>NUOI_METS4</name>